<organism>
    <name type="scientific">Rhizobium etli (strain CIAT 652)</name>
    <dbReference type="NCBI Taxonomy" id="491916"/>
    <lineage>
        <taxon>Bacteria</taxon>
        <taxon>Pseudomonadati</taxon>
        <taxon>Pseudomonadota</taxon>
        <taxon>Alphaproteobacteria</taxon>
        <taxon>Hyphomicrobiales</taxon>
        <taxon>Rhizobiaceae</taxon>
        <taxon>Rhizobium/Agrobacterium group</taxon>
        <taxon>Rhizobium</taxon>
    </lineage>
</organism>
<gene>
    <name evidence="1" type="primary">queF</name>
    <name type="ordered locus">RHECIAT_CH0003229</name>
</gene>
<keyword id="KW-0963">Cytoplasm</keyword>
<keyword id="KW-0521">NADP</keyword>
<keyword id="KW-0560">Oxidoreductase</keyword>
<keyword id="KW-0671">Queuosine biosynthesis</keyword>
<proteinExistence type="inferred from homology"/>
<reference key="1">
    <citation type="journal article" date="2010" name="Appl. Environ. Microbiol.">
        <title>Conserved symbiotic plasmid DNA sequences in the multireplicon pangenomic structure of Rhizobium etli.</title>
        <authorList>
            <person name="Gonzalez V."/>
            <person name="Acosta J.L."/>
            <person name="Santamaria R.I."/>
            <person name="Bustos P."/>
            <person name="Fernandez J.L."/>
            <person name="Hernandez Gonzalez I.L."/>
            <person name="Diaz R."/>
            <person name="Flores M."/>
            <person name="Palacios R."/>
            <person name="Mora J."/>
            <person name="Davila G."/>
        </authorList>
    </citation>
    <scope>NUCLEOTIDE SEQUENCE [LARGE SCALE GENOMIC DNA]</scope>
    <source>
        <strain>CIAT 652</strain>
    </source>
</reference>
<dbReference type="EC" id="1.7.1.13" evidence="1"/>
<dbReference type="EMBL" id="CP001074">
    <property type="protein sequence ID" value="ACE92177.1"/>
    <property type="molecule type" value="Genomic_DNA"/>
</dbReference>
<dbReference type="SMR" id="B3PV52"/>
<dbReference type="KEGG" id="rec:RHECIAT_CH0003229"/>
<dbReference type="eggNOG" id="COG0780">
    <property type="taxonomic scope" value="Bacteria"/>
</dbReference>
<dbReference type="HOGENOM" id="CLU_102489_0_1_5"/>
<dbReference type="UniPathway" id="UPA00392"/>
<dbReference type="Proteomes" id="UP000008817">
    <property type="component" value="Chromosome"/>
</dbReference>
<dbReference type="GO" id="GO:0005737">
    <property type="term" value="C:cytoplasm"/>
    <property type="evidence" value="ECO:0007669"/>
    <property type="project" value="UniProtKB-SubCell"/>
</dbReference>
<dbReference type="GO" id="GO:0033739">
    <property type="term" value="F:preQ1 synthase activity"/>
    <property type="evidence" value="ECO:0007669"/>
    <property type="project" value="UniProtKB-UniRule"/>
</dbReference>
<dbReference type="GO" id="GO:0008616">
    <property type="term" value="P:queuosine biosynthetic process"/>
    <property type="evidence" value="ECO:0007669"/>
    <property type="project" value="UniProtKB-UniRule"/>
</dbReference>
<dbReference type="GO" id="GO:0006400">
    <property type="term" value="P:tRNA modification"/>
    <property type="evidence" value="ECO:0007669"/>
    <property type="project" value="UniProtKB-UniRule"/>
</dbReference>
<dbReference type="Gene3D" id="3.30.1130.10">
    <property type="match status" value="1"/>
</dbReference>
<dbReference type="HAMAP" id="MF_00818">
    <property type="entry name" value="QueF_type1"/>
    <property type="match status" value="1"/>
</dbReference>
<dbReference type="InterPro" id="IPR043133">
    <property type="entry name" value="GTP-CH-I_C/QueF"/>
</dbReference>
<dbReference type="InterPro" id="IPR050084">
    <property type="entry name" value="NADPH_dep_7-cyano-7-deazaG_red"/>
</dbReference>
<dbReference type="InterPro" id="IPR029500">
    <property type="entry name" value="QueF"/>
</dbReference>
<dbReference type="InterPro" id="IPR016856">
    <property type="entry name" value="QueF_type1"/>
</dbReference>
<dbReference type="NCBIfam" id="TIGR03139">
    <property type="entry name" value="QueF-II"/>
    <property type="match status" value="1"/>
</dbReference>
<dbReference type="PANTHER" id="PTHR34354">
    <property type="entry name" value="NADPH-DEPENDENT 7-CYANO-7-DEAZAGUANINE REDUCTASE"/>
    <property type="match status" value="1"/>
</dbReference>
<dbReference type="PANTHER" id="PTHR34354:SF1">
    <property type="entry name" value="NADPH-DEPENDENT 7-CYANO-7-DEAZAGUANINE REDUCTASE"/>
    <property type="match status" value="1"/>
</dbReference>
<dbReference type="Pfam" id="PF14489">
    <property type="entry name" value="QueF"/>
    <property type="match status" value="1"/>
</dbReference>
<dbReference type="PIRSF" id="PIRSF027377">
    <property type="entry name" value="Nitrile_oxidored_QueF"/>
    <property type="match status" value="1"/>
</dbReference>
<dbReference type="SUPFAM" id="SSF55620">
    <property type="entry name" value="Tetrahydrobiopterin biosynthesis enzymes-like"/>
    <property type="match status" value="1"/>
</dbReference>
<protein>
    <recommendedName>
        <fullName evidence="1">NADPH-dependent 7-cyano-7-deazaguanine reductase</fullName>
        <ecNumber evidence="1">1.7.1.13</ecNumber>
    </recommendedName>
    <alternativeName>
        <fullName evidence="1">7-cyano-7-carbaguanine reductase</fullName>
    </alternativeName>
    <alternativeName>
        <fullName evidence="1">NADPH-dependent nitrile oxidoreductase</fullName>
    </alternativeName>
    <alternativeName>
        <fullName evidence="1">PreQ(0) reductase</fullName>
    </alternativeName>
</protein>
<evidence type="ECO:0000255" key="1">
    <source>
        <dbReference type="HAMAP-Rule" id="MF_00818"/>
    </source>
</evidence>
<evidence type="ECO:0000256" key="2">
    <source>
        <dbReference type="SAM" id="MobiDB-lite"/>
    </source>
</evidence>
<accession>B3PV52</accession>
<comment type="function">
    <text evidence="1">Catalyzes the NADPH-dependent reduction of 7-cyano-7-deazaguanine (preQ0) to 7-aminomethyl-7-deazaguanine (preQ1).</text>
</comment>
<comment type="catalytic activity">
    <reaction evidence="1">
        <text>7-aminomethyl-7-carbaguanine + 2 NADP(+) = 7-cyano-7-deazaguanine + 2 NADPH + 3 H(+)</text>
        <dbReference type="Rhea" id="RHEA:13409"/>
        <dbReference type="ChEBI" id="CHEBI:15378"/>
        <dbReference type="ChEBI" id="CHEBI:45075"/>
        <dbReference type="ChEBI" id="CHEBI:57783"/>
        <dbReference type="ChEBI" id="CHEBI:58349"/>
        <dbReference type="ChEBI" id="CHEBI:58703"/>
        <dbReference type="EC" id="1.7.1.13"/>
    </reaction>
</comment>
<comment type="pathway">
    <text evidence="1">tRNA modification; tRNA-queuosine biosynthesis.</text>
</comment>
<comment type="subcellular location">
    <subcellularLocation>
        <location evidence="1">Cytoplasm</location>
    </subcellularLocation>
</comment>
<comment type="similarity">
    <text evidence="1">Belongs to the GTP cyclohydrolase I family. QueF type 1 subfamily.</text>
</comment>
<feature type="chain" id="PRO_1000148674" description="NADPH-dependent 7-cyano-7-deazaguanine reductase">
    <location>
        <begin position="1"/>
        <end position="155"/>
    </location>
</feature>
<feature type="region of interest" description="Disordered" evidence="2">
    <location>
        <begin position="1"/>
        <end position="26"/>
    </location>
</feature>
<feature type="compositionally biased region" description="Polar residues" evidence="2">
    <location>
        <begin position="1"/>
        <end position="20"/>
    </location>
</feature>
<feature type="active site" description="Thioimide intermediate" evidence="1">
    <location>
        <position position="53"/>
    </location>
</feature>
<feature type="active site" description="Proton donor" evidence="1">
    <location>
        <position position="60"/>
    </location>
</feature>
<feature type="binding site" evidence="1">
    <location>
        <begin position="75"/>
        <end position="77"/>
    </location>
    <ligand>
        <name>substrate</name>
    </ligand>
</feature>
<feature type="binding site" evidence="1">
    <location>
        <begin position="94"/>
        <end position="95"/>
    </location>
    <ligand>
        <name>substrate</name>
    </ligand>
</feature>
<name>QUEF_RHIE6</name>
<sequence>MMPNTDVSSLSMLGQQTETAKSPEEAVLEKVPSNHAGTDYVVRFTAPEFTSLCPMTGQPDFAHIVIDYIPSEWLVESKSLKLFLHSFRNHGAFHEDCSIYIAKRIVELLDPKWLRIGAYWYPRGGIPIDVFWQTGKPPEGVWLPEQGVATYRGRG</sequence>